<feature type="chain" id="PRO_0000078972" description="Non-structural protein 1">
    <location>
        <begin position="1"/>
        <end position="281"/>
    </location>
</feature>
<feature type="region of interest" description="G1P2-binding">
    <location>
        <begin position="1"/>
        <end position="103"/>
    </location>
</feature>
<feature type="region of interest" description="RNA-binding and homodimerization" evidence="1">
    <location>
        <begin position="1"/>
        <end position="93"/>
    </location>
</feature>
<feature type="short sequence motif" description="Nuclear localization signal" evidence="1">
    <location>
        <begin position="50"/>
        <end position="55"/>
    </location>
</feature>
<feature type="sequence variant" description="In strain: Mutant AWBY-234.">
    <original>E</original>
    <variation>V</variation>
    <location>
        <position position="66"/>
    </location>
</feature>
<feature type="sequence variant" description="In strain: Mutant AWBY-234.">
    <original>F</original>
    <variation>L</variation>
    <location>
        <position position="90"/>
    </location>
</feature>
<feature type="sequence variant" description="In strain: Mutant AWBY-234.">
    <location>
        <begin position="91"/>
        <end position="281"/>
    </location>
</feature>
<comment type="function">
    <text evidence="1 2">Binds and inhibits the conjugation of the ubiquitin-like G1P2/ISG15 protein to its target proteins. Since G1P2/ISG15 is an early antiviral protein, NS1 may inhibit the host antiviral response. Prevents EIF2AK2/PKR activation, either by binding double strand RNA or by interacting directly with EIF2AK2/PKR. Also binds poly(A) and U6 snRNA.</text>
</comment>
<comment type="subunit">
    <text evidence="1">Homodimer. Interacts with and inhibits human G1P2 conjugation by UBE1L.</text>
</comment>
<comment type="subcellular location">
    <subcellularLocation>
        <location evidence="1">Host cytoplasm</location>
    </subcellularLocation>
    <subcellularLocation>
        <location evidence="1">Host nucleus</location>
    </subcellularLocation>
</comment>
<comment type="alternative products">
    <event type="alternative splicing"/>
    <isoform>
        <id>P08013-1</id>
        <name>NS1</name>
        <sequence type="displayed"/>
    </isoform>
    <isoform>
        <id>P08014-1</id>
        <name>NEP</name>
        <name>NS2</name>
        <sequence type="external"/>
    </isoform>
</comment>
<comment type="domain">
    <text>Both N-terminus and C-terminus can inhibit IFN-beta promoter activation and IRF-3 nuclear translocation.</text>
</comment>
<comment type="similarity">
    <text evidence="1">Belongs to the influenza B viruses NS1 family.</text>
</comment>
<dbReference type="EMBL" id="M16633">
    <property type="protein sequence ID" value="AAA43761.1"/>
    <property type="molecule type" value="Genomic_RNA"/>
</dbReference>
<dbReference type="EMBL" id="M32749">
    <property type="protein sequence ID" value="AAA43757.1"/>
    <property type="molecule type" value="Genomic_RNA"/>
</dbReference>
<dbReference type="PIR" id="A33778">
    <property type="entry name" value="MNIVAW"/>
</dbReference>
<dbReference type="PIR" id="C27529">
    <property type="entry name" value="MNIV73"/>
</dbReference>
<dbReference type="SMR" id="P08013"/>
<dbReference type="GO" id="GO:0030430">
    <property type="term" value="C:host cell cytoplasm"/>
    <property type="evidence" value="ECO:0007669"/>
    <property type="project" value="UniProtKB-SubCell"/>
</dbReference>
<dbReference type="GO" id="GO:0042025">
    <property type="term" value="C:host cell nucleus"/>
    <property type="evidence" value="ECO:0007669"/>
    <property type="project" value="UniProtKB-SubCell"/>
</dbReference>
<dbReference type="GO" id="GO:0030291">
    <property type="term" value="F:protein serine/threonine kinase inhibitor activity"/>
    <property type="evidence" value="ECO:0007669"/>
    <property type="project" value="UniProtKB-KW"/>
</dbReference>
<dbReference type="GO" id="GO:0003723">
    <property type="term" value="F:RNA binding"/>
    <property type="evidence" value="ECO:0007669"/>
    <property type="project" value="UniProtKB-KW"/>
</dbReference>
<dbReference type="GO" id="GO:0039579">
    <property type="term" value="P:symbiont-mediated suppression of host ISG15-protein conjugation"/>
    <property type="evidence" value="ECO:0007669"/>
    <property type="project" value="UniProtKB-KW"/>
</dbReference>
<dbReference type="GO" id="GO:0039580">
    <property type="term" value="P:symbiont-mediated suppression of host PKR/eIFalpha signaling"/>
    <property type="evidence" value="ECO:0007669"/>
    <property type="project" value="UniProtKB-KW"/>
</dbReference>
<dbReference type="GO" id="GO:0039502">
    <property type="term" value="P:symbiont-mediated suppression of host type I interferon-mediated signaling pathway"/>
    <property type="evidence" value="ECO:0007669"/>
    <property type="project" value="UniProtKB-KW"/>
</dbReference>
<dbReference type="Gene3D" id="1.10.287.10">
    <property type="entry name" value="S15/NS1, RNA-binding"/>
    <property type="match status" value="1"/>
</dbReference>
<dbReference type="HAMAP" id="MF_04066">
    <property type="entry name" value="INFV_NS1"/>
    <property type="match status" value="1"/>
</dbReference>
<dbReference type="InterPro" id="IPR004208">
    <property type="entry name" value="NS1"/>
</dbReference>
<dbReference type="InterPro" id="IPR009068">
    <property type="entry name" value="uS15_NS1_RNA-bd_sf"/>
</dbReference>
<dbReference type="Pfam" id="PF02942">
    <property type="entry name" value="Flu_B_NS1"/>
    <property type="match status" value="1"/>
</dbReference>
<dbReference type="PIRSF" id="PIRSF003938">
    <property type="entry name" value="Flu_B_NS1"/>
    <property type="match status" value="1"/>
</dbReference>
<dbReference type="SUPFAM" id="SSF47060">
    <property type="entry name" value="S15/NS1 RNA-binding domain"/>
    <property type="match status" value="1"/>
</dbReference>
<reference key="1">
    <citation type="journal article" date="1987" name="Virology">
        <title>Infectious influenza A and B virus variants with long carboxyl terminal deletions in the NS1 polypeptides.</title>
        <authorList>
            <person name="Norton G.P."/>
            <person name="Tanaka T."/>
            <person name="Tobita K."/>
            <person name="Nakada S."/>
            <person name="Buonagurio D.A."/>
            <person name="Greenspan D."/>
            <person name="Krystal M."/>
            <person name="Palese P."/>
        </authorList>
    </citation>
    <scope>NUCLEOTIDE SEQUENCE [GENOMIC RNA]</scope>
</reference>
<reference key="2">
    <citation type="journal article" date="1990" name="Virology">
        <title>Nucleotide sequence and some biological properties of the NS gene of a newly isolated influenza B virus mutant which has a long carboxyl terminal deletion in the NS1 protein.</title>
        <authorList>
            <person name="Tobita K."/>
            <person name="Tanaka T."/>
            <person name="Odagiri T."/>
            <person name="Tashiro M."/>
            <person name="Feng S.Y."/>
        </authorList>
    </citation>
    <scope>NUCLEOTIDE SEQUENCE [GENOMIC RNA]</scope>
    <source>
        <strain>Mutant AWBY-234</strain>
    </source>
</reference>
<reference key="3">
    <citation type="journal article" date="2004" name="Proc. Natl. Acad. Sci. U.S.A.">
        <title>Interferon antagonist proteins of influenza and vaccinia viruses are suppressors of RNA silencing.</title>
        <authorList>
            <person name="Li W.-X."/>
            <person name="Li H."/>
            <person name="Lu R."/>
            <person name="Li F."/>
            <person name="Dus M."/>
            <person name="Atkinson P."/>
            <person name="Brydon E.W.A."/>
            <person name="Johnson K.L."/>
            <person name="Garcia-Sastre A."/>
            <person name="Ball L.A."/>
            <person name="Palese P."/>
            <person name="Ding S.-W."/>
        </authorList>
    </citation>
    <scope>FUNCTION AS A SUPPRESSOR OF RNA SILENCING</scope>
</reference>
<reference key="4">
    <citation type="journal article" date="2003" name="Virology">
        <title>Intracellular warfare between human influenza viruses and human cells: the roles of the viral NS1 protein.</title>
        <authorList>
            <person name="Krug R.M."/>
            <person name="Yuan W."/>
            <person name="Noah D.L."/>
            <person name="Latham A.G."/>
        </authorList>
    </citation>
    <scope>REVIEW</scope>
</reference>
<proteinExistence type="evidence at protein level"/>
<name>NS1_INBYA</name>
<evidence type="ECO:0000255" key="1">
    <source>
        <dbReference type="HAMAP-Rule" id="MF_04066"/>
    </source>
</evidence>
<evidence type="ECO:0000269" key="2">
    <source>
    </source>
</evidence>
<organism>
    <name type="scientific">Influenza B virus (strain B/Yamagata/1/1973)</name>
    <dbReference type="NCBI Taxonomy" id="11550"/>
    <lineage>
        <taxon>Viruses</taxon>
        <taxon>Riboviria</taxon>
        <taxon>Orthornavirae</taxon>
        <taxon>Negarnaviricota</taxon>
        <taxon>Polyploviricotina</taxon>
        <taxon>Insthoviricetes</taxon>
        <taxon>Articulavirales</taxon>
        <taxon>Orthomyxoviridae</taxon>
        <taxon>Betainfluenzavirus</taxon>
        <taxon>Betainfluenzavirus influenzae</taxon>
        <taxon>Influenza B virus</taxon>
    </lineage>
</organism>
<accession>P08013</accession>
<sequence length="281" mass="31943">MADNMTTTQIEVGPGATNATINFEAGILECYERLSWQRALDYPGQDRLNRLKRKLESRIKTHNKSEPESKRMSLEERKAIGVKMMKVLLFMNPSAGIEGFEPYCMKNSSNSNCPNCNWTDYPPTSGKCLDDIEEEPENVDDPTEIVLRDMNNKDARQKIKEEVNTQKEGKFRLTIKRDIRNVLSLRVLVNGTFLKHPNGYKSLSTLHRLNAYDQSGRLVAKLVATDDLTVEDEEDGHRILNSLFERFNEGHSKPIRAAETAVGVLSQFGQEHRLSPEEGDN</sequence>
<organismHost>
    <name type="scientific">Homo sapiens</name>
    <name type="common">Human</name>
    <dbReference type="NCBI Taxonomy" id="9606"/>
</organismHost>
<gene>
    <name evidence="1" type="primary">NS</name>
</gene>
<keyword id="KW-0025">Alternative splicing</keyword>
<keyword id="KW-1035">Host cytoplasm</keyword>
<keyword id="KW-1048">Host nucleus</keyword>
<keyword id="KW-0945">Host-virus interaction</keyword>
<keyword id="KW-1090">Inhibition of host innate immune response by virus</keyword>
<keyword id="KW-1114">Inhibition of host interferon signaling pathway by virus</keyword>
<keyword id="KW-1095">Inhibition of host ISG15 by virus</keyword>
<keyword id="KW-1102">Inhibition of host PKR by virus</keyword>
<keyword id="KW-0922">Interferon antiviral system evasion</keyword>
<keyword id="KW-0694">RNA-binding</keyword>
<keyword id="KW-0899">Viral immunoevasion</keyword>
<protein>
    <recommendedName>
        <fullName evidence="1">Non-structural protein 1</fullName>
        <shortName evidence="1">NS1</shortName>
    </recommendedName>
    <alternativeName>
        <fullName evidence="1">NS1A</fullName>
    </alternativeName>
</protein>